<comment type="subcellular location">
    <subcellularLocation>
        <location evidence="3">Secreted</location>
    </subcellularLocation>
</comment>
<comment type="similarity">
    <text evidence="3">Belongs to the Sct family.</text>
</comment>
<organism>
    <name type="scientific">Dictyostelium discoideum</name>
    <name type="common">Social amoeba</name>
    <dbReference type="NCBI Taxonomy" id="44689"/>
    <lineage>
        <taxon>Eukaryota</taxon>
        <taxon>Amoebozoa</taxon>
        <taxon>Evosea</taxon>
        <taxon>Eumycetozoa</taxon>
        <taxon>Dictyostelia</taxon>
        <taxon>Dictyosteliales</taxon>
        <taxon>Dictyosteliaceae</taxon>
        <taxon>Dictyostelium</taxon>
    </lineage>
</organism>
<gene>
    <name evidence="2" type="primary">sctD</name>
    <name type="ORF">DDB0185889</name>
</gene>
<dbReference type="EMBL" id="AAFI01000105">
    <property type="protein sequence ID" value="EAL65288.1"/>
    <property type="molecule type" value="Genomic_DNA"/>
</dbReference>
<dbReference type="RefSeq" id="XP_638639.1">
    <property type="nucleotide sequence ID" value="XM_633547.1"/>
</dbReference>
<dbReference type="SMR" id="Q54Q06"/>
<dbReference type="STRING" id="44689.Q54Q06"/>
<dbReference type="GlyCosmos" id="Q54Q06">
    <property type="glycosylation" value="1 site, No reported glycans"/>
</dbReference>
<dbReference type="PaxDb" id="44689-DDB0185889"/>
<dbReference type="KEGG" id="ddi:DDB_G0284199"/>
<dbReference type="dictyBase" id="DDB_G0284199"/>
<dbReference type="VEuPathDB" id="AmoebaDB:DDB_G0284199"/>
<dbReference type="eggNOG" id="ENOG502RHPX">
    <property type="taxonomic scope" value="Eukaryota"/>
</dbReference>
<dbReference type="HOGENOM" id="CLU_1247348_0_0_1"/>
<dbReference type="OMA" id="PNECIDS"/>
<dbReference type="PRO" id="PR:Q54Q06"/>
<dbReference type="GO" id="GO:0005576">
    <property type="term" value="C:extracellular region"/>
    <property type="evidence" value="ECO:0007669"/>
    <property type="project" value="UniProtKB-SubCell"/>
</dbReference>
<dbReference type="CDD" id="cd22935">
    <property type="entry name" value="SctA-like"/>
    <property type="match status" value="1"/>
</dbReference>
<dbReference type="PANTHER" id="PTHR38742">
    <property type="entry name" value="PROTEIN GP17"/>
    <property type="match status" value="1"/>
</dbReference>
<dbReference type="PANTHER" id="PTHR38742:SF5">
    <property type="entry name" value="SECRETED PROTEIN A"/>
    <property type="match status" value="1"/>
</dbReference>
<protein>
    <recommendedName>
        <fullName evidence="2">Secreted protein D</fullName>
    </recommendedName>
</protein>
<keyword id="KW-0325">Glycoprotein</keyword>
<keyword id="KW-0964">Secreted</keyword>
<keyword id="KW-0732">Signal</keyword>
<feature type="signal peptide" evidence="1">
    <location>
        <begin position="1"/>
        <end position="22"/>
    </location>
</feature>
<feature type="chain" id="PRO_5004250101" description="Secreted protein D" evidence="1">
    <location>
        <begin position="23"/>
        <end position="222"/>
    </location>
</feature>
<feature type="glycosylation site" description="N-linked (GlcNAc...) asparagine" evidence="1">
    <location>
        <position position="25"/>
    </location>
</feature>
<reference key="1">
    <citation type="journal article" date="2005" name="Nature">
        <title>The genome of the social amoeba Dictyostelium discoideum.</title>
        <authorList>
            <person name="Eichinger L."/>
            <person name="Pachebat J.A."/>
            <person name="Gloeckner G."/>
            <person name="Rajandream M.A."/>
            <person name="Sucgang R."/>
            <person name="Berriman M."/>
            <person name="Song J."/>
            <person name="Olsen R."/>
            <person name="Szafranski K."/>
            <person name="Xu Q."/>
            <person name="Tunggal B."/>
            <person name="Kummerfeld S."/>
            <person name="Madera M."/>
            <person name="Konfortov B.A."/>
            <person name="Rivero F."/>
            <person name="Bankier A.T."/>
            <person name="Lehmann R."/>
            <person name="Hamlin N."/>
            <person name="Davies R."/>
            <person name="Gaudet P."/>
            <person name="Fey P."/>
            <person name="Pilcher K."/>
            <person name="Chen G."/>
            <person name="Saunders D."/>
            <person name="Sodergren E.J."/>
            <person name="Davis P."/>
            <person name="Kerhornou A."/>
            <person name="Nie X."/>
            <person name="Hall N."/>
            <person name="Anjard C."/>
            <person name="Hemphill L."/>
            <person name="Bason N."/>
            <person name="Farbrother P."/>
            <person name="Desany B."/>
            <person name="Just E."/>
            <person name="Morio T."/>
            <person name="Rost R."/>
            <person name="Churcher C.M."/>
            <person name="Cooper J."/>
            <person name="Haydock S."/>
            <person name="van Driessche N."/>
            <person name="Cronin A."/>
            <person name="Goodhead I."/>
            <person name="Muzny D.M."/>
            <person name="Mourier T."/>
            <person name="Pain A."/>
            <person name="Lu M."/>
            <person name="Harper D."/>
            <person name="Lindsay R."/>
            <person name="Hauser H."/>
            <person name="James K.D."/>
            <person name="Quiles M."/>
            <person name="Madan Babu M."/>
            <person name="Saito T."/>
            <person name="Buchrieser C."/>
            <person name="Wardroper A."/>
            <person name="Felder M."/>
            <person name="Thangavelu M."/>
            <person name="Johnson D."/>
            <person name="Knights A."/>
            <person name="Loulseged H."/>
            <person name="Mungall K.L."/>
            <person name="Oliver K."/>
            <person name="Price C."/>
            <person name="Quail M.A."/>
            <person name="Urushihara H."/>
            <person name="Hernandez J."/>
            <person name="Rabbinowitsch E."/>
            <person name="Steffen D."/>
            <person name="Sanders M."/>
            <person name="Ma J."/>
            <person name="Kohara Y."/>
            <person name="Sharp S."/>
            <person name="Simmonds M.N."/>
            <person name="Spiegler S."/>
            <person name="Tivey A."/>
            <person name="Sugano S."/>
            <person name="White B."/>
            <person name="Walker D."/>
            <person name="Woodward J.R."/>
            <person name="Winckler T."/>
            <person name="Tanaka Y."/>
            <person name="Shaulsky G."/>
            <person name="Schleicher M."/>
            <person name="Weinstock G.M."/>
            <person name="Rosenthal A."/>
            <person name="Cox E.C."/>
            <person name="Chisholm R.L."/>
            <person name="Gibbs R.A."/>
            <person name="Loomis W.F."/>
            <person name="Platzer M."/>
            <person name="Kay R.R."/>
            <person name="Williams J.G."/>
            <person name="Dear P.H."/>
            <person name="Noegel A.A."/>
            <person name="Barrell B.G."/>
            <person name="Kuspa A."/>
        </authorList>
    </citation>
    <scope>NUCLEOTIDE SEQUENCE [LARGE SCALE GENOMIC DNA]</scope>
    <source>
        <strain>AX4</strain>
    </source>
</reference>
<reference key="2">
    <citation type="journal article" date="2016" name="PLoS ONE">
        <title>Pycnosomes: condensed endosomal structures secreted by Dictyostelium amoebae.</title>
        <authorList>
            <person name="Sabra A."/>
            <person name="Leiba J."/>
            <person name="Mas L."/>
            <person name="Louwagie M."/>
            <person name="Coute Y."/>
            <person name="Journet A."/>
            <person name="Cosson P."/>
            <person name="Aubry L."/>
        </authorList>
    </citation>
    <scope>IDENTIFICATION</scope>
</reference>
<sequence>MKIYYLFFVLIYLIYFINLVYCEKNDTSIILDDILDIQHNRKLFPKITHQDIENIRQIRRMNLHSIVKSMSTLNVQDLGLGIFAGLEKSVNPNPNECIDSLRTSIDNTNQVFYDISNFFGITIQEFLTLIQIFPTIIKDDIRLYDACGANVIVMKIGKFAHIIRTEGLQSFANYAKNALYSNPFYLIPVTRGLLESLVTKNYQMLGVHIGEYLGILFNSDDD</sequence>
<accession>Q54Q06</accession>
<evidence type="ECO:0000255" key="1"/>
<evidence type="ECO:0000303" key="2">
    <source>
    </source>
</evidence>
<evidence type="ECO:0000305" key="3"/>
<name>SCTD_DICDI</name>
<proteinExistence type="inferred from homology"/>